<organism>
    <name type="scientific">Homo sapiens</name>
    <name type="common">Human</name>
    <dbReference type="NCBI Taxonomy" id="9606"/>
    <lineage>
        <taxon>Eukaryota</taxon>
        <taxon>Metazoa</taxon>
        <taxon>Chordata</taxon>
        <taxon>Craniata</taxon>
        <taxon>Vertebrata</taxon>
        <taxon>Euteleostomi</taxon>
        <taxon>Mammalia</taxon>
        <taxon>Eutheria</taxon>
        <taxon>Euarchontoglires</taxon>
        <taxon>Primates</taxon>
        <taxon>Haplorrhini</taxon>
        <taxon>Catarrhini</taxon>
        <taxon>Hominidae</taxon>
        <taxon>Homo</taxon>
    </lineage>
</organism>
<sequence length="530" mass="60143">MGAAASRRRALRSEAMSSVAAKVRAARAFGEYLSQSHPENRNGADHLLADAYSGHDGSPEMQPAPQNKRRLSLVSNGCYEGSLSEEPSIRKPAGEGPQPRVYTISGEPALLPSPEAEAIELAVVKGRRQRHPHHHSQPLRASPGGSREDVSRPCQSWAGSRQGSKECPGCAQLAPGPTPRAFGLDQPPLPETSGRRKKLERMYSVDRVSDDIPIRTWFPKENLFSFQTATTTMQAISVFRGYAERKRRKRENDSASVIQRNFRKHLRMVGSRRVKAQTFAERRERSFSRSWSDPTPMKADTSHDSRDSSDLQSSHCTLDEAFEDLDWDTEKGLEAVACDTEGFVPPKVMLISSKVPKAEYIPTIIRRDDPSIIPILYDHEHATFEDILEEIERKLNVYHKGAKIWKMLIFCQGGPGHLYLLKNKVATFAKVEKEEDMIHFWKRLSRLMSKVNPEPNVIHIMGCYILGNPNGEKLFQNLRTLMTPYRVTFESPLELSAQGKQMIETYFDFRLYRLWKSRQHSKLLDFDDVL</sequence>
<proteinExistence type="evidence at protein level"/>
<name>NSMF_HUMAN</name>
<reference key="1">
    <citation type="journal article" date="2004" name="J. Hum. Genet.">
        <title>Characterization of the human nasal embryonic LHRH factor gene, NELF, and a mutation screening among 65 patients with idiopathic hypogonadotropic hypogonadism (IHH).</title>
        <authorList>
            <person name="Miura K."/>
            <person name="Acierno J.S. Jr."/>
            <person name="Seminara S.B."/>
        </authorList>
    </citation>
    <scope>NUCLEOTIDE SEQUENCE [MRNA] (ISOFORMS 1; 2; 3; 4 AND 5)</scope>
    <scope>TISSUE SPECIFICITY</scope>
    <scope>VARIANT HH9 ALA-480</scope>
    <source>
        <tissue>Brain</tissue>
    </source>
</reference>
<reference key="2">
    <citation type="journal article" date="2004" name="Nat. Genet.">
        <title>Complete sequencing and characterization of 21,243 full-length human cDNAs.</title>
        <authorList>
            <person name="Ota T."/>
            <person name="Suzuki Y."/>
            <person name="Nishikawa T."/>
            <person name="Otsuki T."/>
            <person name="Sugiyama T."/>
            <person name="Irie R."/>
            <person name="Wakamatsu A."/>
            <person name="Hayashi K."/>
            <person name="Sato H."/>
            <person name="Nagai K."/>
            <person name="Kimura K."/>
            <person name="Makita H."/>
            <person name="Sekine M."/>
            <person name="Obayashi M."/>
            <person name="Nishi T."/>
            <person name="Shibahara T."/>
            <person name="Tanaka T."/>
            <person name="Ishii S."/>
            <person name="Yamamoto J."/>
            <person name="Saito K."/>
            <person name="Kawai Y."/>
            <person name="Isono Y."/>
            <person name="Nakamura Y."/>
            <person name="Nagahari K."/>
            <person name="Murakami K."/>
            <person name="Yasuda T."/>
            <person name="Iwayanagi T."/>
            <person name="Wagatsuma M."/>
            <person name="Shiratori A."/>
            <person name="Sudo H."/>
            <person name="Hosoiri T."/>
            <person name="Kaku Y."/>
            <person name="Kodaira H."/>
            <person name="Kondo H."/>
            <person name="Sugawara M."/>
            <person name="Takahashi M."/>
            <person name="Kanda K."/>
            <person name="Yokoi T."/>
            <person name="Furuya T."/>
            <person name="Kikkawa E."/>
            <person name="Omura Y."/>
            <person name="Abe K."/>
            <person name="Kamihara K."/>
            <person name="Katsuta N."/>
            <person name="Sato K."/>
            <person name="Tanikawa M."/>
            <person name="Yamazaki M."/>
            <person name="Ninomiya K."/>
            <person name="Ishibashi T."/>
            <person name="Yamashita H."/>
            <person name="Murakawa K."/>
            <person name="Fujimori K."/>
            <person name="Tanai H."/>
            <person name="Kimata M."/>
            <person name="Watanabe M."/>
            <person name="Hiraoka S."/>
            <person name="Chiba Y."/>
            <person name="Ishida S."/>
            <person name="Ono Y."/>
            <person name="Takiguchi S."/>
            <person name="Watanabe S."/>
            <person name="Yosida M."/>
            <person name="Hotuta T."/>
            <person name="Kusano J."/>
            <person name="Kanehori K."/>
            <person name="Takahashi-Fujii A."/>
            <person name="Hara H."/>
            <person name="Tanase T.-O."/>
            <person name="Nomura Y."/>
            <person name="Togiya S."/>
            <person name="Komai F."/>
            <person name="Hara R."/>
            <person name="Takeuchi K."/>
            <person name="Arita M."/>
            <person name="Imose N."/>
            <person name="Musashino K."/>
            <person name="Yuuki H."/>
            <person name="Oshima A."/>
            <person name="Sasaki N."/>
            <person name="Aotsuka S."/>
            <person name="Yoshikawa Y."/>
            <person name="Matsunawa H."/>
            <person name="Ichihara T."/>
            <person name="Shiohata N."/>
            <person name="Sano S."/>
            <person name="Moriya S."/>
            <person name="Momiyama H."/>
            <person name="Satoh N."/>
            <person name="Takami S."/>
            <person name="Terashima Y."/>
            <person name="Suzuki O."/>
            <person name="Nakagawa S."/>
            <person name="Senoh A."/>
            <person name="Mizoguchi H."/>
            <person name="Goto Y."/>
            <person name="Shimizu F."/>
            <person name="Wakebe H."/>
            <person name="Hishigaki H."/>
            <person name="Watanabe T."/>
            <person name="Sugiyama A."/>
            <person name="Takemoto M."/>
            <person name="Kawakami B."/>
            <person name="Yamazaki M."/>
            <person name="Watanabe K."/>
            <person name="Kumagai A."/>
            <person name="Itakura S."/>
            <person name="Fukuzumi Y."/>
            <person name="Fujimori Y."/>
            <person name="Komiyama M."/>
            <person name="Tashiro H."/>
            <person name="Tanigami A."/>
            <person name="Fujiwara T."/>
            <person name="Ono T."/>
            <person name="Yamada K."/>
            <person name="Fujii Y."/>
            <person name="Ozaki K."/>
            <person name="Hirao M."/>
            <person name="Ohmori Y."/>
            <person name="Kawabata A."/>
            <person name="Hikiji T."/>
            <person name="Kobatake N."/>
            <person name="Inagaki H."/>
            <person name="Ikema Y."/>
            <person name="Okamoto S."/>
            <person name="Okitani R."/>
            <person name="Kawakami T."/>
            <person name="Noguchi S."/>
            <person name="Itoh T."/>
            <person name="Shigeta K."/>
            <person name="Senba T."/>
            <person name="Matsumura K."/>
            <person name="Nakajima Y."/>
            <person name="Mizuno T."/>
            <person name="Morinaga M."/>
            <person name="Sasaki M."/>
            <person name="Togashi T."/>
            <person name="Oyama M."/>
            <person name="Hata H."/>
            <person name="Watanabe M."/>
            <person name="Komatsu T."/>
            <person name="Mizushima-Sugano J."/>
            <person name="Satoh T."/>
            <person name="Shirai Y."/>
            <person name="Takahashi Y."/>
            <person name="Nakagawa K."/>
            <person name="Okumura K."/>
            <person name="Nagase T."/>
            <person name="Nomura N."/>
            <person name="Kikuchi H."/>
            <person name="Masuho Y."/>
            <person name="Yamashita R."/>
            <person name="Nakai K."/>
            <person name="Yada T."/>
            <person name="Nakamura Y."/>
            <person name="Ohara O."/>
            <person name="Isogai T."/>
            <person name="Sugano S."/>
        </authorList>
    </citation>
    <scope>NUCLEOTIDE SEQUENCE [LARGE SCALE MRNA] (ISOFORM 2)</scope>
    <source>
        <tissue>Embryo</tissue>
    </source>
</reference>
<reference key="3">
    <citation type="journal article" date="2004" name="Nature">
        <title>DNA sequence and analysis of human chromosome 9.</title>
        <authorList>
            <person name="Humphray S.J."/>
            <person name="Oliver K."/>
            <person name="Hunt A.R."/>
            <person name="Plumb R.W."/>
            <person name="Loveland J.E."/>
            <person name="Howe K.L."/>
            <person name="Andrews T.D."/>
            <person name="Searle S."/>
            <person name="Hunt S.E."/>
            <person name="Scott C.E."/>
            <person name="Jones M.C."/>
            <person name="Ainscough R."/>
            <person name="Almeida J.P."/>
            <person name="Ambrose K.D."/>
            <person name="Ashwell R.I.S."/>
            <person name="Babbage A.K."/>
            <person name="Babbage S."/>
            <person name="Bagguley C.L."/>
            <person name="Bailey J."/>
            <person name="Banerjee R."/>
            <person name="Barker D.J."/>
            <person name="Barlow K.F."/>
            <person name="Bates K."/>
            <person name="Beasley H."/>
            <person name="Beasley O."/>
            <person name="Bird C.P."/>
            <person name="Bray-Allen S."/>
            <person name="Brown A.J."/>
            <person name="Brown J.Y."/>
            <person name="Burford D."/>
            <person name="Burrill W."/>
            <person name="Burton J."/>
            <person name="Carder C."/>
            <person name="Carter N.P."/>
            <person name="Chapman J.C."/>
            <person name="Chen Y."/>
            <person name="Clarke G."/>
            <person name="Clark S.Y."/>
            <person name="Clee C.M."/>
            <person name="Clegg S."/>
            <person name="Collier R.E."/>
            <person name="Corby N."/>
            <person name="Crosier M."/>
            <person name="Cummings A.T."/>
            <person name="Davies J."/>
            <person name="Dhami P."/>
            <person name="Dunn M."/>
            <person name="Dutta I."/>
            <person name="Dyer L.W."/>
            <person name="Earthrowl M.E."/>
            <person name="Faulkner L."/>
            <person name="Fleming C.J."/>
            <person name="Frankish A."/>
            <person name="Frankland J.A."/>
            <person name="French L."/>
            <person name="Fricker D.G."/>
            <person name="Garner P."/>
            <person name="Garnett J."/>
            <person name="Ghori J."/>
            <person name="Gilbert J.G.R."/>
            <person name="Glison C."/>
            <person name="Grafham D.V."/>
            <person name="Gribble S."/>
            <person name="Griffiths C."/>
            <person name="Griffiths-Jones S."/>
            <person name="Grocock R."/>
            <person name="Guy J."/>
            <person name="Hall R.E."/>
            <person name="Hammond S."/>
            <person name="Harley J.L."/>
            <person name="Harrison E.S.I."/>
            <person name="Hart E.A."/>
            <person name="Heath P.D."/>
            <person name="Henderson C.D."/>
            <person name="Hopkins B.L."/>
            <person name="Howard P.J."/>
            <person name="Howden P.J."/>
            <person name="Huckle E."/>
            <person name="Johnson C."/>
            <person name="Johnson D."/>
            <person name="Joy A.A."/>
            <person name="Kay M."/>
            <person name="Keenan S."/>
            <person name="Kershaw J.K."/>
            <person name="Kimberley A.M."/>
            <person name="King A."/>
            <person name="Knights A."/>
            <person name="Laird G.K."/>
            <person name="Langford C."/>
            <person name="Lawlor S."/>
            <person name="Leongamornlert D.A."/>
            <person name="Leversha M."/>
            <person name="Lloyd C."/>
            <person name="Lloyd D.M."/>
            <person name="Lovell J."/>
            <person name="Martin S."/>
            <person name="Mashreghi-Mohammadi M."/>
            <person name="Matthews L."/>
            <person name="McLaren S."/>
            <person name="McLay K.E."/>
            <person name="McMurray A."/>
            <person name="Milne S."/>
            <person name="Nickerson T."/>
            <person name="Nisbett J."/>
            <person name="Nordsiek G."/>
            <person name="Pearce A.V."/>
            <person name="Peck A.I."/>
            <person name="Porter K.M."/>
            <person name="Pandian R."/>
            <person name="Pelan S."/>
            <person name="Phillimore B."/>
            <person name="Povey S."/>
            <person name="Ramsey Y."/>
            <person name="Rand V."/>
            <person name="Scharfe M."/>
            <person name="Sehra H.K."/>
            <person name="Shownkeen R."/>
            <person name="Sims S.K."/>
            <person name="Skuce C.D."/>
            <person name="Smith M."/>
            <person name="Steward C.A."/>
            <person name="Swarbreck D."/>
            <person name="Sycamore N."/>
            <person name="Tester J."/>
            <person name="Thorpe A."/>
            <person name="Tracey A."/>
            <person name="Tromans A."/>
            <person name="Thomas D.W."/>
            <person name="Wall M."/>
            <person name="Wallis J.M."/>
            <person name="West A.P."/>
            <person name="Whitehead S.L."/>
            <person name="Willey D.L."/>
            <person name="Williams S.A."/>
            <person name="Wilming L."/>
            <person name="Wray P.W."/>
            <person name="Young L."/>
            <person name="Ashurst J.L."/>
            <person name="Coulson A."/>
            <person name="Blocker H."/>
            <person name="Durbin R.M."/>
            <person name="Sulston J.E."/>
            <person name="Hubbard T."/>
            <person name="Jackson M.J."/>
            <person name="Bentley D.R."/>
            <person name="Beck S."/>
            <person name="Rogers J."/>
            <person name="Dunham I."/>
        </authorList>
    </citation>
    <scope>NUCLEOTIDE SEQUENCE [LARGE SCALE GENOMIC DNA]</scope>
</reference>
<reference key="4">
    <citation type="journal article" date="2004" name="Genome Res.">
        <title>The status, quality, and expansion of the NIH full-length cDNA project: the Mammalian Gene Collection (MGC).</title>
        <authorList>
            <consortium name="The MGC Project Team"/>
        </authorList>
    </citation>
    <scope>NUCLEOTIDE SEQUENCE [LARGE SCALE MRNA] (ISOFORMS 2 AND 6)</scope>
    <source>
        <tissue>Brain</tissue>
        <tissue>Colon</tissue>
    </source>
</reference>
<reference key="5">
    <citation type="submission" date="2000-07" db="EMBL/GenBank/DDBJ databases">
        <authorList>
            <consortium name="The European IMAGE consortium"/>
        </authorList>
    </citation>
    <scope>NUCLEOTIDE SEQUENCE [LARGE SCALE MRNA] OF 241-530</scope>
</reference>
<reference key="6">
    <citation type="journal article" date="2010" name="Mol. Cell. Endocrinol.">
        <title>NELF is a nuclear protein involved in hypothalamic GnRH neuronal migration.</title>
        <authorList>
            <person name="Xu N."/>
            <person name="Bhagavath B."/>
            <person name="Kim H.G."/>
            <person name="Halvorson L."/>
            <person name="Podolsky R.S."/>
            <person name="Chorich L.P."/>
            <person name="Prasad P."/>
            <person name="Xiong W.C."/>
            <person name="Cameron R.S."/>
            <person name="Layman L.C."/>
        </authorList>
    </citation>
    <scope>FUNCTION</scope>
    <scope>MUTAGENESIS OF 247-ARG--ARG-250 AND 263-ARG-LYS-264</scope>
    <scope>SUBCELLULAR LOCATION</scope>
    <scope>TISSUE SPECIFICITY</scope>
</reference>
<reference key="7">
    <citation type="journal article" date="2011" name="Proc. Natl. Acad. Sci. U.S.A.">
        <title>Heparan sulfate 6-O-sulfotransferase 1, a gene involved in extracellular sugar modifications, is mutated in patients with idiopathic hypogonadotrophic hypogonadism.</title>
        <authorList>
            <person name="Tornberg J."/>
            <person name="Sykiotis G.P."/>
            <person name="Keefe K."/>
            <person name="Plummer L."/>
            <person name="Hoang X."/>
            <person name="Hall J.E."/>
            <person name="Quinton R."/>
            <person name="Seminara S.B."/>
            <person name="Hughes V."/>
            <person name="Van Vliet G."/>
            <person name="Van Uum S."/>
            <person name="Crowley W.F."/>
            <person name="Habuchi H."/>
            <person name="Kimata K."/>
            <person name="Pitteloud N."/>
            <person name="Bulow H.E."/>
        </authorList>
    </citation>
    <scope>VARIANT HH9 ALA-480</scope>
</reference>
<reference key="8">
    <citation type="journal article" date="2013" name="Am. J. Hum. Genet.">
        <title>Mutations in FGF17, IL17RD, DUSP6, SPRY4, and FLRT3 are identified in individuals with congenital hypogonadotropic hypogonadism.</title>
        <authorList>
            <person name="Miraoui H."/>
            <person name="Dwyer A.A."/>
            <person name="Sykiotis G.P."/>
            <person name="Plummer L."/>
            <person name="Chung W."/>
            <person name="Feng B."/>
            <person name="Beenken A."/>
            <person name="Clarke J."/>
            <person name="Pers T.H."/>
            <person name="Dworzynski P."/>
            <person name="Keefe K."/>
            <person name="Niedziela M."/>
            <person name="Raivio T."/>
            <person name="Crowley W.F. Jr."/>
            <person name="Seminara S.B."/>
            <person name="Quinton R."/>
            <person name="Hughes V.A."/>
            <person name="Kumanov P."/>
            <person name="Young J."/>
            <person name="Yialamas M.A."/>
            <person name="Hall J.E."/>
            <person name="Van Vliet G."/>
            <person name="Chanoine J.P."/>
            <person name="Rubenstein J."/>
            <person name="Mohammadi M."/>
            <person name="Tsai P.S."/>
            <person name="Sidis Y."/>
            <person name="Lage K."/>
            <person name="Pitteloud N."/>
        </authorList>
    </citation>
    <scope>VARIANT HH9 HIS-196</scope>
</reference>
<feature type="initiator methionine" description="Removed">
    <location>
        <position position="1"/>
    </location>
</feature>
<feature type="chain" id="PRO_0000096778" description="NMDA receptor synaptonuclear signaling and neuronal migration factor">
    <location>
        <begin position="2"/>
        <end position="530"/>
    </location>
</feature>
<feature type="region of interest" description="Necessary and sufficient to elicit dendritic processes and synaptic contacts" evidence="1">
    <location>
        <begin position="2"/>
        <end position="233"/>
    </location>
</feature>
<feature type="region of interest" description="Disordered" evidence="4">
    <location>
        <begin position="34"/>
        <end position="67"/>
    </location>
</feature>
<feature type="region of interest" description="Disordered" evidence="4">
    <location>
        <begin position="125"/>
        <end position="197"/>
    </location>
</feature>
<feature type="region of interest" description="Disordered" evidence="4">
    <location>
        <begin position="285"/>
        <end position="312"/>
    </location>
</feature>
<feature type="short sequence motif" description="Nuclear localization signal">
    <location>
        <begin position="247"/>
        <end position="250"/>
    </location>
</feature>
<feature type="compositionally biased region" description="Basic and acidic residues" evidence="4">
    <location>
        <begin position="38"/>
        <end position="48"/>
    </location>
</feature>
<feature type="compositionally biased region" description="Basic residues" evidence="4">
    <location>
        <begin position="125"/>
        <end position="137"/>
    </location>
</feature>
<feature type="compositionally biased region" description="Polar residues" evidence="4">
    <location>
        <begin position="153"/>
        <end position="162"/>
    </location>
</feature>
<feature type="compositionally biased region" description="Basic and acidic residues" evidence="4">
    <location>
        <begin position="300"/>
        <end position="309"/>
    </location>
</feature>
<feature type="modified residue" description="Phosphoserine" evidence="2">
    <location>
        <position position="204"/>
    </location>
</feature>
<feature type="modified residue" description="Phosphoserine" evidence="3">
    <location>
        <position position="290"/>
    </location>
</feature>
<feature type="modified residue" description="Phosphoserine" evidence="3">
    <location>
        <position position="292"/>
    </location>
</feature>
<feature type="lipid moiety-binding region" description="N-myristoyl glycine" evidence="1">
    <location>
        <position position="2"/>
    </location>
</feature>
<feature type="splice variant" id="VSP_014759" description="In isoform 2 and isoform 6." evidence="9 10 11">
    <location>
        <begin position="236"/>
        <end position="237"/>
    </location>
</feature>
<feature type="splice variant" id="VSP_014760" description="In isoform 3 and isoform 6." evidence="10 11">
    <location>
        <begin position="238"/>
        <end position="260"/>
    </location>
</feature>
<feature type="splice variant" id="VSP_014761" description="In isoform 4." evidence="10">
    <location>
        <begin position="278"/>
        <end position="307"/>
    </location>
</feature>
<feature type="splice variant" id="VSP_014762" description="In isoform 5." evidence="10">
    <original>LISSKVPKAEYIPTIIRRDDPSIIPILYDHEHATFEDILEEIERKLNVYHKGA</original>
    <variation>VRPSPGSAPLHPEQDSAPTRVQPALPGTTQPSPAAWGRVSHRAIPLGCLAARR</variation>
    <location>
        <begin position="350"/>
        <end position="402"/>
    </location>
</feature>
<feature type="splice variant" id="VSP_014763" description="In isoform 5." evidence="10">
    <location>
        <begin position="403"/>
        <end position="530"/>
    </location>
</feature>
<feature type="sequence variant" id="VAR_069967" description="In HH9; phenotype consistent with Kallmann syndrome; the patient also carries a mutation in FGFR1; dbSNP:rs770597015." evidence="8">
    <original>R</original>
    <variation>H</variation>
    <location>
        <position position="196"/>
    </location>
</feature>
<feature type="sequence variant" id="VAR_023003" description="In HH9; sporadic case; dbSNP:rs121918340." evidence="5 7">
    <original>T</original>
    <variation>A</variation>
    <location>
        <position position="480"/>
    </location>
</feature>
<feature type="sequence variant" id="VAR_059699" description="In dbSNP:rs34177733.">
    <original>L</original>
    <variation>V</variation>
    <location>
        <position position="511"/>
    </location>
</feature>
<feature type="mutagenesis site" description="Localizes predominantly in the cytoplasm." evidence="6">
    <original>RRKR</original>
    <variation>AAKA</variation>
    <location>
        <begin position="247"/>
        <end position="250"/>
    </location>
</feature>
<feature type="mutagenesis site" description="Localizes both in the cytoplasm and the nucleus." evidence="6">
    <original>RK</original>
    <variation>AA</variation>
    <location>
        <begin position="263"/>
        <end position="264"/>
    </location>
</feature>
<keyword id="KW-0025">Alternative splicing</keyword>
<keyword id="KW-1003">Cell membrane</keyword>
<keyword id="KW-0966">Cell projection</keyword>
<keyword id="KW-0963">Cytoplasm</keyword>
<keyword id="KW-0206">Cytoskeleton</keyword>
<keyword id="KW-0225">Disease variant</keyword>
<keyword id="KW-1016">Hypogonadotropic hypogonadism</keyword>
<keyword id="KW-0956">Kallmann syndrome</keyword>
<keyword id="KW-0449">Lipoprotein</keyword>
<keyword id="KW-0472">Membrane</keyword>
<keyword id="KW-0519">Myristate</keyword>
<keyword id="KW-0539">Nucleus</keyword>
<keyword id="KW-0597">Phosphoprotein</keyword>
<keyword id="KW-1267">Proteomics identification</keyword>
<keyword id="KW-1185">Reference proteome</keyword>
<keyword id="KW-0770">Synapse</keyword>
<keyword id="KW-0771">Synaptosome</keyword>
<dbReference type="EMBL" id="AY255128">
    <property type="protein sequence ID" value="AAP83576.1"/>
    <property type="molecule type" value="mRNA"/>
</dbReference>
<dbReference type="EMBL" id="AY255129">
    <property type="protein sequence ID" value="AAP83577.1"/>
    <property type="molecule type" value="mRNA"/>
</dbReference>
<dbReference type="EMBL" id="AY255130">
    <property type="protein sequence ID" value="AAP83578.1"/>
    <property type="molecule type" value="mRNA"/>
</dbReference>
<dbReference type="EMBL" id="AY255131">
    <property type="protein sequence ID" value="AAP83579.1"/>
    <property type="molecule type" value="mRNA"/>
</dbReference>
<dbReference type="EMBL" id="AY255132">
    <property type="protein sequence ID" value="AAP83580.1"/>
    <property type="molecule type" value="mRNA"/>
</dbReference>
<dbReference type="EMBL" id="AK027474">
    <property type="protein sequence ID" value="BAB55139.1"/>
    <property type="status" value="ALT_INIT"/>
    <property type="molecule type" value="mRNA"/>
</dbReference>
<dbReference type="EMBL" id="AK074602">
    <property type="protein sequence ID" value="BAC11086.1"/>
    <property type="molecule type" value="mRNA"/>
</dbReference>
<dbReference type="EMBL" id="AL365502">
    <property type="status" value="NOT_ANNOTATED_CDS"/>
    <property type="molecule type" value="Genomic_DNA"/>
</dbReference>
<dbReference type="EMBL" id="BC072412">
    <property type="protein sequence ID" value="AAH72412.1"/>
    <property type="molecule type" value="mRNA"/>
</dbReference>
<dbReference type="EMBL" id="BC110498">
    <property type="protein sequence ID" value="AAI10499.1"/>
    <property type="molecule type" value="mRNA"/>
</dbReference>
<dbReference type="EMBL" id="AL389944">
    <property type="protein sequence ID" value="CAB97524.1"/>
    <property type="molecule type" value="mRNA"/>
</dbReference>
<dbReference type="EMBL" id="AL389946">
    <property type="protein sequence ID" value="CAB97525.1"/>
    <property type="molecule type" value="mRNA"/>
</dbReference>
<dbReference type="EMBL" id="AL389945">
    <property type="protein sequence ID" value="CAB97542.1"/>
    <property type="molecule type" value="mRNA"/>
</dbReference>
<dbReference type="CCDS" id="CCDS48067.1">
    <molecule id="Q6X4W1-6"/>
</dbReference>
<dbReference type="CCDS" id="CCDS48068.1">
    <molecule id="Q6X4W1-3"/>
</dbReference>
<dbReference type="CCDS" id="CCDS48069.1">
    <molecule id="Q6X4W1-1"/>
</dbReference>
<dbReference type="CCDS" id="CCDS55357.1">
    <molecule id="Q6X4W1-4"/>
</dbReference>
<dbReference type="CCDS" id="CCDS7044.1">
    <molecule id="Q6X4W1-2"/>
</dbReference>
<dbReference type="PIR" id="T17341">
    <property type="entry name" value="T17341"/>
</dbReference>
<dbReference type="RefSeq" id="NP_001124441.1">
    <molecule id="Q6X4W1-1"/>
    <property type="nucleotide sequence ID" value="NM_001130969.3"/>
</dbReference>
<dbReference type="RefSeq" id="NP_001124442.1">
    <molecule id="Q6X4W1-3"/>
    <property type="nucleotide sequence ID" value="NM_001130970.2"/>
</dbReference>
<dbReference type="RefSeq" id="NP_001124443.1">
    <molecule id="Q6X4W1-6"/>
    <property type="nucleotide sequence ID" value="NM_001130971.2"/>
</dbReference>
<dbReference type="RefSeq" id="NP_001171535.1">
    <molecule id="Q6X4W1-4"/>
    <property type="nucleotide sequence ID" value="NM_001178064.2"/>
</dbReference>
<dbReference type="RefSeq" id="NP_056352.3">
    <molecule id="Q6X4W1-2"/>
    <property type="nucleotide sequence ID" value="NM_015537.4"/>
</dbReference>
<dbReference type="SMR" id="Q6X4W1"/>
<dbReference type="BioGRID" id="117485">
    <property type="interactions" value="34"/>
</dbReference>
<dbReference type="FunCoup" id="Q6X4W1">
    <property type="interactions" value="80"/>
</dbReference>
<dbReference type="IntAct" id="Q6X4W1">
    <property type="interactions" value="39"/>
</dbReference>
<dbReference type="STRING" id="9606.ENSP00000360530"/>
<dbReference type="GlyGen" id="Q6X4W1">
    <property type="glycosylation" value="2 sites, 1 O-linked glycan (1 site)"/>
</dbReference>
<dbReference type="iPTMnet" id="Q6X4W1"/>
<dbReference type="PhosphoSitePlus" id="Q6X4W1"/>
<dbReference type="BioMuta" id="NSMF"/>
<dbReference type="DMDM" id="71152011"/>
<dbReference type="jPOST" id="Q6X4W1"/>
<dbReference type="MassIVE" id="Q6X4W1"/>
<dbReference type="PaxDb" id="9606-ENSP00000360530"/>
<dbReference type="PeptideAtlas" id="Q6X4W1"/>
<dbReference type="ProteomicsDB" id="67783">
    <molecule id="Q6X4W1-1"/>
</dbReference>
<dbReference type="ProteomicsDB" id="67784">
    <molecule id="Q6X4W1-2"/>
</dbReference>
<dbReference type="ProteomicsDB" id="67785">
    <molecule id="Q6X4W1-3"/>
</dbReference>
<dbReference type="ProteomicsDB" id="67786">
    <molecule id="Q6X4W1-4"/>
</dbReference>
<dbReference type="ProteomicsDB" id="67787">
    <molecule id="Q6X4W1-5"/>
</dbReference>
<dbReference type="ProteomicsDB" id="67788">
    <molecule id="Q6X4W1-6"/>
</dbReference>
<dbReference type="Antibodypedia" id="32451">
    <property type="antibodies" value="171 antibodies from 28 providers"/>
</dbReference>
<dbReference type="DNASU" id="26012"/>
<dbReference type="Ensembl" id="ENST00000265663.12">
    <molecule id="Q6X4W1-2"/>
    <property type="protein sequence ID" value="ENSP00000265663.7"/>
    <property type="gene ID" value="ENSG00000165802.23"/>
</dbReference>
<dbReference type="Ensembl" id="ENST00000371472.6">
    <molecule id="Q6X4W1-2"/>
    <property type="protein sequence ID" value="ENSP00000360527.1"/>
    <property type="gene ID" value="ENSG00000165802.23"/>
</dbReference>
<dbReference type="Ensembl" id="ENST00000371473.7">
    <molecule id="Q6X4W1-4"/>
    <property type="protein sequence ID" value="ENSP00000360528.3"/>
    <property type="gene ID" value="ENSG00000165802.23"/>
</dbReference>
<dbReference type="Ensembl" id="ENST00000371474.7">
    <molecule id="Q6X4W1-6"/>
    <property type="protein sequence ID" value="ENSP00000360529.3"/>
    <property type="gene ID" value="ENSG00000165802.23"/>
</dbReference>
<dbReference type="Ensembl" id="ENST00000371475.9">
    <molecule id="Q6X4W1-1"/>
    <property type="protein sequence ID" value="ENSP00000360530.3"/>
    <property type="gene ID" value="ENSG00000165802.23"/>
</dbReference>
<dbReference type="Ensembl" id="ENST00000437259.5">
    <molecule id="Q6X4W1-3"/>
    <property type="protein sequence ID" value="ENSP00000412007.1"/>
    <property type="gene ID" value="ENSG00000165802.23"/>
</dbReference>
<dbReference type="GeneID" id="26012"/>
<dbReference type="KEGG" id="hsa:26012"/>
<dbReference type="MANE-Select" id="ENST00000371475.9">
    <property type="protein sequence ID" value="ENSP00000360530.3"/>
    <property type="RefSeq nucleotide sequence ID" value="NM_001130969.3"/>
    <property type="RefSeq protein sequence ID" value="NP_001124441.1"/>
</dbReference>
<dbReference type="UCSC" id="uc004cmz.4">
    <molecule id="Q6X4W1-1"/>
    <property type="organism name" value="human"/>
</dbReference>
<dbReference type="AGR" id="HGNC:29843"/>
<dbReference type="CTD" id="26012"/>
<dbReference type="DisGeNET" id="26012"/>
<dbReference type="GeneCards" id="NSMF"/>
<dbReference type="GeneReviews" id="NSMF"/>
<dbReference type="HGNC" id="HGNC:29843">
    <property type="gene designation" value="NSMF"/>
</dbReference>
<dbReference type="HPA" id="ENSG00000165802">
    <property type="expression patterns" value="Tissue enriched (brain)"/>
</dbReference>
<dbReference type="MalaCards" id="NSMF"/>
<dbReference type="MIM" id="608137">
    <property type="type" value="gene"/>
</dbReference>
<dbReference type="MIM" id="614838">
    <property type="type" value="phenotype"/>
</dbReference>
<dbReference type="neXtProt" id="NX_Q6X4W1"/>
<dbReference type="OpenTargets" id="ENSG00000165802"/>
<dbReference type="Orphanet" id="432">
    <property type="disease" value="Normosmic congenital hypogonadotropic hypogonadism"/>
</dbReference>
<dbReference type="PharmGKB" id="PA134917144"/>
<dbReference type="VEuPathDB" id="HostDB:ENSG00000165802"/>
<dbReference type="eggNOG" id="ENOG502QRME">
    <property type="taxonomic scope" value="Eukaryota"/>
</dbReference>
<dbReference type="GeneTree" id="ENSGT00390000000459"/>
<dbReference type="HOGENOM" id="CLU_038476_2_0_1"/>
<dbReference type="InParanoid" id="Q6X4W1"/>
<dbReference type="OMA" id="GRPCKSW"/>
<dbReference type="OrthoDB" id="6161298at2759"/>
<dbReference type="PAN-GO" id="Q6X4W1">
    <property type="GO annotations" value="3 GO annotations based on evolutionary models"/>
</dbReference>
<dbReference type="PhylomeDB" id="Q6X4W1"/>
<dbReference type="TreeFam" id="TF331286"/>
<dbReference type="PathwayCommons" id="Q6X4W1"/>
<dbReference type="SignaLink" id="Q6X4W1"/>
<dbReference type="BioGRID-ORCS" id="26012">
    <property type="hits" value="20 hits in 1148 CRISPR screens"/>
</dbReference>
<dbReference type="ChiTaRS" id="NSMF">
    <property type="organism name" value="human"/>
</dbReference>
<dbReference type="GeneWiki" id="Nasal_embryonic_LHRH_factor"/>
<dbReference type="GenomeRNAi" id="26012"/>
<dbReference type="Pharos" id="Q6X4W1">
    <property type="development level" value="Tbio"/>
</dbReference>
<dbReference type="PRO" id="PR:Q6X4W1"/>
<dbReference type="Proteomes" id="UP000005640">
    <property type="component" value="Chromosome 9"/>
</dbReference>
<dbReference type="RNAct" id="Q6X4W1">
    <property type="molecule type" value="protein"/>
</dbReference>
<dbReference type="Bgee" id="ENSG00000165802">
    <property type="expression patterns" value="Expressed in cortical plate and 170 other cell types or tissues"/>
</dbReference>
<dbReference type="ExpressionAtlas" id="Q6X4W1">
    <property type="expression patterns" value="baseline and differential"/>
</dbReference>
<dbReference type="GO" id="GO:0097440">
    <property type="term" value="C:apical dendrite"/>
    <property type="evidence" value="ECO:0000250"/>
    <property type="project" value="UniProtKB"/>
</dbReference>
<dbReference type="GO" id="GO:0030863">
    <property type="term" value="C:cortical cytoskeleton"/>
    <property type="evidence" value="ECO:0000250"/>
    <property type="project" value="UniProtKB"/>
</dbReference>
<dbReference type="GO" id="GO:0005737">
    <property type="term" value="C:cytoplasm"/>
    <property type="evidence" value="ECO:0000314"/>
    <property type="project" value="UniProtKB"/>
</dbReference>
<dbReference type="GO" id="GO:0030425">
    <property type="term" value="C:dendrite"/>
    <property type="evidence" value="ECO:0000250"/>
    <property type="project" value="UniProtKB"/>
</dbReference>
<dbReference type="GO" id="GO:0000791">
    <property type="term" value="C:euchromatin"/>
    <property type="evidence" value="ECO:0000250"/>
    <property type="project" value="UniProtKB"/>
</dbReference>
<dbReference type="GO" id="GO:0016020">
    <property type="term" value="C:membrane"/>
    <property type="evidence" value="ECO:0000250"/>
    <property type="project" value="UniProtKB"/>
</dbReference>
<dbReference type="GO" id="GO:0043005">
    <property type="term" value="C:neuron projection"/>
    <property type="evidence" value="ECO:0000250"/>
    <property type="project" value="UniProtKB"/>
</dbReference>
<dbReference type="GO" id="GO:0005635">
    <property type="term" value="C:nuclear envelope"/>
    <property type="evidence" value="ECO:0000250"/>
    <property type="project" value="UniProtKB"/>
</dbReference>
<dbReference type="GO" id="GO:0016363">
    <property type="term" value="C:nuclear matrix"/>
    <property type="evidence" value="ECO:0000250"/>
    <property type="project" value="UniProtKB"/>
</dbReference>
<dbReference type="GO" id="GO:0031965">
    <property type="term" value="C:nuclear membrane"/>
    <property type="evidence" value="ECO:0000250"/>
    <property type="project" value="UniProtKB"/>
</dbReference>
<dbReference type="GO" id="GO:0005654">
    <property type="term" value="C:nucleoplasm"/>
    <property type="evidence" value="ECO:0000314"/>
    <property type="project" value="HPA"/>
</dbReference>
<dbReference type="GO" id="GO:0005634">
    <property type="term" value="C:nucleus"/>
    <property type="evidence" value="ECO:0000314"/>
    <property type="project" value="UniProtKB"/>
</dbReference>
<dbReference type="GO" id="GO:0043204">
    <property type="term" value="C:perikaryon"/>
    <property type="evidence" value="ECO:0000250"/>
    <property type="project" value="UniProtKB"/>
</dbReference>
<dbReference type="GO" id="GO:0005886">
    <property type="term" value="C:plasma membrane"/>
    <property type="evidence" value="ECO:0007669"/>
    <property type="project" value="UniProtKB-SubCell"/>
</dbReference>
<dbReference type="GO" id="GO:0014069">
    <property type="term" value="C:postsynaptic density"/>
    <property type="evidence" value="ECO:0000250"/>
    <property type="project" value="UniProtKB"/>
</dbReference>
<dbReference type="GO" id="GO:0045202">
    <property type="term" value="C:synapse"/>
    <property type="evidence" value="ECO:0000250"/>
    <property type="project" value="UniProtKB"/>
</dbReference>
<dbReference type="GO" id="GO:0048306">
    <property type="term" value="F:calcium-dependent protein binding"/>
    <property type="evidence" value="ECO:0000250"/>
    <property type="project" value="UniProtKB"/>
</dbReference>
<dbReference type="GO" id="GO:0071230">
    <property type="term" value="P:cellular response to amino acid stimulus"/>
    <property type="evidence" value="ECO:0000250"/>
    <property type="project" value="UniProtKB"/>
</dbReference>
<dbReference type="GO" id="GO:0071257">
    <property type="term" value="P:cellular response to electrical stimulus"/>
    <property type="evidence" value="ECO:0000250"/>
    <property type="project" value="UniProtKB"/>
</dbReference>
<dbReference type="GO" id="GO:0071371">
    <property type="term" value="P:cellular response to gonadotropin stimulus"/>
    <property type="evidence" value="ECO:0000250"/>
    <property type="project" value="UniProtKB"/>
</dbReference>
<dbReference type="GO" id="GO:2001224">
    <property type="term" value="P:positive regulation of neuron migration"/>
    <property type="evidence" value="ECO:0000315"/>
    <property type="project" value="UniProtKB"/>
</dbReference>
<dbReference type="GO" id="GO:0048814">
    <property type="term" value="P:regulation of dendrite morphogenesis"/>
    <property type="evidence" value="ECO:0000250"/>
    <property type="project" value="UniProtKB"/>
</dbReference>
<dbReference type="GO" id="GO:0043523">
    <property type="term" value="P:regulation of neuron apoptotic process"/>
    <property type="evidence" value="ECO:0000250"/>
    <property type="project" value="UniProtKB"/>
</dbReference>
<dbReference type="GO" id="GO:0048168">
    <property type="term" value="P:regulation of neuronal synaptic plasticity"/>
    <property type="evidence" value="ECO:0000250"/>
    <property type="project" value="UniProtKB"/>
</dbReference>
<dbReference type="Gene3D" id="1.20.5.1190">
    <property type="entry name" value="iswi atpase"/>
    <property type="match status" value="1"/>
</dbReference>
<dbReference type="InterPro" id="IPR033374">
    <property type="entry name" value="NSMF"/>
</dbReference>
<dbReference type="PANTHER" id="PTHR32061">
    <property type="entry name" value="NMDA RECEPTOR SYNAPTONUCLEAR SIGNALING AND NEURONAL MIGRATION FACTOR"/>
    <property type="match status" value="1"/>
</dbReference>
<comment type="function">
    <text evidence="6">Couples NMDA-sensitive glutamate receptor signaling to the nucleus and triggers long-lasting changes in the cytoarchitecture of dendrites and spine synapse processes. Part of the cAMP response element-binding protein (CREB) shut-off signaling pathway. Stimulates outgrowth of olfactory axons and migration of gonadotropin-releasing hormone (GnRH) and luteinizing-hormone-releasing hormone (LHRH) neuronal cells.</text>
</comment>
<comment type="subunit">
    <text evidence="1">Interacts with KPNA1; the interaction occurs in a calcium-independent manner after synaptic NMDA receptor stimulation and is required for nuclear import of NSMF but is competed by CABP1. Interacts (via the central NLS-containing motif region) with CABP1 (via EF-hands 1 and 2); the interaction occurs in a calcium-dependent manner after synaptic NMDA receptor stimulation and prevents the nuclear import of NSMF. Cannot be competed by calmodulin (By similarity).</text>
</comment>
<comment type="interaction">
    <interactant intactId="EBI-12028784">
        <id>Q6X4W1-2</id>
    </interactant>
    <interactant intactId="EBI-711189">
        <id>Q9BPX5</id>
        <label>ARPC5L</label>
    </interactant>
    <organismsDiffer>false</organismsDiffer>
    <experiments>3</experiments>
</comment>
<comment type="interaction">
    <interactant intactId="EBI-12028784">
        <id>Q6X4W1-2</id>
    </interactant>
    <interactant intactId="EBI-11977221">
        <id>Q86Z20</id>
        <label>CCDC125</label>
    </interactant>
    <organismsDiffer>false</organismsDiffer>
    <experiments>3</experiments>
</comment>
<comment type="interaction">
    <interactant intactId="EBI-12028784">
        <id>Q6X4W1-2</id>
    </interactant>
    <interactant intactId="EBI-748961">
        <id>O95273</id>
        <label>CCNDBP1</label>
    </interactant>
    <organismsDiffer>false</organismsDiffer>
    <experiments>3</experiments>
</comment>
<comment type="interaction">
    <interactant intactId="EBI-12028784">
        <id>Q6X4W1-2</id>
    </interactant>
    <interactant intactId="EBI-618309">
        <id>Q08379</id>
        <label>GOLGA2</label>
    </interactant>
    <organismsDiffer>false</organismsDiffer>
    <experiments>3</experiments>
</comment>
<comment type="interaction">
    <interactant intactId="EBI-12028784">
        <id>Q6X4W1-2</id>
    </interactant>
    <interactant intactId="EBI-5916454">
        <id>A6NEM1</id>
        <label>GOLGA6L9</label>
    </interactant>
    <organismsDiffer>false</organismsDiffer>
    <experiments>3</experiments>
</comment>
<comment type="interaction">
    <interactant intactId="EBI-12028784">
        <id>Q6X4W1-2</id>
    </interactant>
    <interactant intactId="EBI-7116203">
        <id>O75031</id>
        <label>HSF2BP</label>
    </interactant>
    <organismsDiffer>false</organismsDiffer>
    <experiments>3</experiments>
</comment>
<comment type="interaction">
    <interactant intactId="EBI-12028784">
        <id>Q6X4W1-2</id>
    </interactant>
    <interactant intactId="EBI-14069005">
        <id>Q9BVG8-5</id>
        <label>KIFC3</label>
    </interactant>
    <organismsDiffer>false</organismsDiffer>
    <experiments>3</experiments>
</comment>
<comment type="interaction">
    <interactant intactId="EBI-12028784">
        <id>Q6X4W1-2</id>
    </interactant>
    <interactant intactId="EBI-11959475">
        <id>P25791-3</id>
        <label>LMO2</label>
    </interactant>
    <organismsDiffer>false</organismsDiffer>
    <experiments>3</experiments>
</comment>
<comment type="interaction">
    <interactant intactId="EBI-12028784">
        <id>Q6X4W1-2</id>
    </interactant>
    <interactant intactId="EBI-1044504">
        <id>Q9BS40</id>
        <label>LXN</label>
    </interactant>
    <organismsDiffer>false</organismsDiffer>
    <experiments>3</experiments>
</comment>
<comment type="interaction">
    <interactant intactId="EBI-12028784">
        <id>Q6X4W1-2</id>
    </interactant>
    <interactant intactId="EBI-10172526">
        <id>Q9UJV3-2</id>
        <label>MID2</label>
    </interactant>
    <organismsDiffer>false</organismsDiffer>
    <experiments>3</experiments>
</comment>
<comment type="interaction">
    <interactant intactId="EBI-12028784">
        <id>Q6X4W1-2</id>
    </interactant>
    <interactant intactId="EBI-1642165">
        <id>O14950</id>
        <label>MYL12B</label>
    </interactant>
    <organismsDiffer>false</organismsDiffer>
    <experiments>3</experiments>
</comment>
<comment type="interaction">
    <interactant intactId="EBI-12028784">
        <id>Q6X4W1-2</id>
    </interactant>
    <interactant intactId="EBI-302345">
        <id>Q8ND90</id>
        <label>PNMA1</label>
    </interactant>
    <organismsDiffer>false</organismsDiffer>
    <experiments>3</experiments>
</comment>
<comment type="interaction">
    <interactant intactId="EBI-12028784">
        <id>Q6X4W1-2</id>
    </interactant>
    <interactant intactId="EBI-2860264">
        <id>Q16825</id>
        <label>PTPN21</label>
    </interactant>
    <organismsDiffer>false</organismsDiffer>
    <experiments>3</experiments>
</comment>
<comment type="interaction">
    <interactant intactId="EBI-12028784">
        <id>Q6X4W1-2</id>
    </interactant>
    <interactant intactId="EBI-22734539">
        <id>P29377</id>
        <label>S100G</label>
    </interactant>
    <organismsDiffer>false</organismsDiffer>
    <experiments>3</experiments>
</comment>
<comment type="interaction">
    <interactant intactId="EBI-12028784">
        <id>Q6X4W1-2</id>
    </interactant>
    <interactant intactId="EBI-1539606">
        <id>O14512</id>
        <label>SOCS7</label>
    </interactant>
    <organismsDiffer>false</organismsDiffer>
    <experiments>3</experiments>
</comment>
<comment type="interaction">
    <interactant intactId="EBI-12028784">
        <id>Q6X4W1-2</id>
    </interactant>
    <interactant intactId="EBI-1105213">
        <id>Q9UBB9</id>
        <label>TFIP11</label>
    </interactant>
    <organismsDiffer>false</organismsDiffer>
    <experiments>3</experiments>
</comment>
<comment type="interaction">
    <interactant intactId="EBI-12028784">
        <id>Q6X4W1-2</id>
    </interactant>
    <interactant intactId="EBI-355744">
        <id>Q12933</id>
        <label>TRAF2</label>
    </interactant>
    <organismsDiffer>false</organismsDiffer>
    <experiments>3</experiments>
</comment>
<comment type="interaction">
    <interactant intactId="EBI-12028784">
        <id>Q6X4W1-2</id>
    </interactant>
    <interactant intactId="EBI-742327">
        <id>Q15654</id>
        <label>TRIP6</label>
    </interactant>
    <organismsDiffer>false</organismsDiffer>
    <experiments>3</experiments>
</comment>
<comment type="interaction">
    <interactant intactId="EBI-12028784">
        <id>Q6X4W1-2</id>
    </interactant>
    <interactant intactId="EBI-9090990">
        <id>Q5W5X9-3</id>
        <label>TTC23</label>
    </interactant>
    <organismsDiffer>false</organismsDiffer>
    <experiments>3</experiments>
</comment>
<comment type="interaction">
    <interactant intactId="EBI-12028784">
        <id>Q6X4W1-2</id>
    </interactant>
    <interactant intactId="EBI-7353612">
        <id>P57075-2</id>
        <label>UBASH3A</label>
    </interactant>
    <organismsDiffer>false</organismsDiffer>
    <experiments>3</experiments>
</comment>
<comment type="interaction">
    <interactant intactId="EBI-25842707">
        <id>Q6X4W1-6</id>
    </interactant>
    <interactant intactId="EBI-10976677">
        <id>G5E9A7</id>
        <label>DMWD</label>
    </interactant>
    <organismsDiffer>false</organismsDiffer>
    <experiments>3</experiments>
</comment>
<comment type="interaction">
    <interactant intactId="EBI-25842707">
        <id>Q6X4W1-6</id>
    </interactant>
    <interactant intactId="EBI-744302">
        <id>P14136</id>
        <label>GFAP</label>
    </interactant>
    <organismsDiffer>false</organismsDiffer>
    <experiments>3</experiments>
</comment>
<comment type="interaction">
    <interactant intactId="EBI-25842707">
        <id>Q6X4W1-6</id>
    </interactant>
    <interactant intactId="EBI-466029">
        <id>P42858</id>
        <label>HTT</label>
    </interactant>
    <organismsDiffer>false</organismsDiffer>
    <experiments>6</experiments>
</comment>
<comment type="interaction">
    <interactant intactId="EBI-25842707">
        <id>Q6X4W1-6</id>
    </interactant>
    <interactant intactId="EBI-1055254">
        <id>Q8WXH2</id>
        <label>JPH3</label>
    </interactant>
    <organismsDiffer>false</organismsDiffer>
    <experiments>3</experiments>
</comment>
<comment type="interaction">
    <interactant intactId="EBI-25842707">
        <id>Q6X4W1-6</id>
    </interactant>
    <interactant intactId="EBI-10975473">
        <id>O60333-2</id>
        <label>KIF1B</label>
    </interactant>
    <organismsDiffer>false</organismsDiffer>
    <experiments>3</experiments>
</comment>
<comment type="interaction">
    <interactant intactId="EBI-25842707">
        <id>Q6X4W1-6</id>
    </interactant>
    <interactant intactId="EBI-351935">
        <id>P02545</id>
        <label>LMNA</label>
    </interactant>
    <organismsDiffer>false</organismsDiffer>
    <experiments>3</experiments>
</comment>
<comment type="interaction">
    <interactant intactId="EBI-25842707">
        <id>Q6X4W1-6</id>
    </interactant>
    <interactant intactId="EBI-713665">
        <id>P19404</id>
        <label>NDUFV2</label>
    </interactant>
    <organismsDiffer>false</organismsDiffer>
    <experiments>3</experiments>
</comment>
<comment type="interaction">
    <interactant intactId="EBI-25842707">
        <id>Q6X4W1-6</id>
    </interactant>
    <interactant intactId="EBI-475646">
        <id>P07196</id>
        <label>NEFL</label>
    </interactant>
    <organismsDiffer>false</organismsDiffer>
    <experiments>3</experiments>
</comment>
<comment type="interaction">
    <interactant intactId="EBI-25842707">
        <id>Q6X4W1-6</id>
    </interactant>
    <interactant intactId="EBI-1014472">
        <id>P35240</id>
        <label>NF2</label>
    </interactant>
    <organismsDiffer>false</organismsDiffer>
    <experiments>3</experiments>
</comment>
<comment type="interaction">
    <interactant intactId="EBI-25842707">
        <id>Q6X4W1-6</id>
    </interactant>
    <interactant intactId="EBI-1391623">
        <id>P29474</id>
        <label>NOS3</label>
    </interactant>
    <organismsDiffer>false</organismsDiffer>
    <experiments>3</experiments>
</comment>
<comment type="interaction">
    <interactant intactId="EBI-25842707">
        <id>Q6X4W1-6</id>
    </interactant>
    <interactant intactId="EBI-396669">
        <id>Q9Y3C5</id>
        <label>RNF11</label>
    </interactant>
    <organismsDiffer>false</organismsDiffer>
    <experiments>3</experiments>
</comment>
<comment type="interaction">
    <interactant intactId="EBI-25842707">
        <id>Q6X4W1-6</id>
    </interactant>
    <interactant intactId="EBI-5235340">
        <id>Q7Z699</id>
        <label>SPRED1</label>
    </interactant>
    <organismsDiffer>false</organismsDiffer>
    <experiments>3</experiments>
</comment>
<comment type="interaction">
    <interactant intactId="EBI-25842707">
        <id>Q6X4W1-6</id>
    </interactant>
    <interactant intactId="EBI-720609">
        <id>O76024</id>
        <label>WFS1</label>
    </interactant>
    <organismsDiffer>false</organismsDiffer>
    <experiments>3</experiments>
</comment>
<comment type="subcellular location">
    <subcellularLocation>
        <location evidence="6">Nucleus</location>
    </subcellularLocation>
    <subcellularLocation>
        <location evidence="1">Nucleus envelope</location>
    </subcellularLocation>
    <subcellularLocation>
        <location evidence="1">Nucleus membrane</location>
    </subcellularLocation>
    <subcellularLocation>
        <location evidence="1">Nucleus matrix</location>
    </subcellularLocation>
    <subcellularLocation>
        <location evidence="6">Cytoplasm</location>
    </subcellularLocation>
    <subcellularLocation>
        <location evidence="1">Cytoplasm</location>
        <location evidence="1">Cell cortex</location>
    </subcellularLocation>
    <subcellularLocation>
        <location evidence="1">Cytoplasm</location>
        <location evidence="1">Cytoskeleton</location>
    </subcellularLocation>
    <subcellularLocation>
        <location evidence="6">Cell membrane</location>
        <topology evidence="6">Peripheral membrane protein</topology>
    </subcellularLocation>
    <subcellularLocation>
        <location evidence="1">Cell projection</location>
        <location evidence="1">Dendrite</location>
    </subcellularLocation>
    <subcellularLocation>
        <location evidence="1">Synapse</location>
    </subcellularLocation>
    <subcellularLocation>
        <location evidence="1">Synapse</location>
        <location evidence="1">Synaptosome</location>
    </subcellularLocation>
    <subcellularLocation>
        <location evidence="1">Postsynaptic density</location>
    </subcellularLocation>
    <subcellularLocation>
        <location evidence="1">Membrane</location>
    </subcellularLocation>
    <text evidence="1">Found on the outside of the luteinizing-hormone-releasing hormone (LHRH) cell membrane and axons projecting from the olfactory pit and epithelium. Associates with transcriptionally active chromatin regions. Detected at the nuclear membranes of CA1 neurons. Cortical cytoskeleton. Localized in proximal apical dendrites. Colocalizes with CABP1 in dendrites and dendritic spines. Myristoylation is a prerequisite for extranuclear localization. Translocates from dendrites to the nucleus during NMDA receptor-dependent long-term potentiation (LTP) induction of synaptic transmission at Schaffer collateral/CA1 synapses of hippocampal primary neurons and in a importin-dependent manner (By similarity).</text>
</comment>
<comment type="alternative products">
    <event type="alternative splicing"/>
    <isoform>
        <id>Q6X4W1-1</id>
        <name>1</name>
        <name>NELF-v1</name>
        <sequence type="displayed"/>
    </isoform>
    <isoform>
        <id>Q6X4W1-2</id>
        <name>2</name>
        <name>NELF-v2</name>
        <sequence type="described" ref="VSP_014759"/>
    </isoform>
    <isoform>
        <id>Q6X4W1-3</id>
        <name>3</name>
        <name>NELF-v3</name>
        <sequence type="described" ref="VSP_014760"/>
    </isoform>
    <isoform>
        <id>Q6X4W1-4</id>
        <name>4</name>
        <name>NELF-v4</name>
        <sequence type="described" ref="VSP_014761"/>
    </isoform>
    <isoform>
        <id>Q6X4W1-5</id>
        <name>5</name>
        <name>NELF-v5</name>
        <sequence type="described" ref="VSP_014762 VSP_014763"/>
    </isoform>
    <isoform>
        <id>Q6X4W1-6</id>
        <name>6</name>
        <sequence type="described" ref="VSP_014759 VSP_014760"/>
    </isoform>
</comment>
<comment type="tissue specificity">
    <text evidence="5 6">Highly expressed in adult and fetal brain. Weakly expressed in heart, liver, spleen, testis, small intestine, skeletal muscle, peripheral white blood cells and kidney.</text>
</comment>
<comment type="PTM">
    <text evidence="1">Proteolytically processed after NMDA receptor activation. Cleaved in a calcium-dependent and calpain-sensitive manner. Calpain cleavage is essential for the translocation process from dendrites to the nucleus (By similarity).</text>
</comment>
<comment type="disease" evidence="5 7 8">
    <disease id="DI-03569">
        <name>Hypogonadotropic hypogonadism 9 with or without anosmia</name>
        <acronym>HH9</acronym>
        <description>A disorder characterized by absent or incomplete sexual maturation by the age of 18 years, in conjunction with low levels of circulating gonadotropins and testosterone and no other abnormalities of the hypothalamic-pituitary axis. In some cases, it is associated with non-reproductive phenotypes, such as anosmia, cleft palate, and sensorineural hearing loss. Anosmia or hyposmia is related to the absence or hypoplasia of the olfactory bulbs and tracts. Hypogonadism is due to deficiency in gonadotropin-releasing hormone and probably results from a failure of embryonic migration of gonadotropin-releasing hormone-synthesizing neurons. In the presence of anosmia, idiopathic hypogonadotropic hypogonadism is referred to as Kallmann syndrome, whereas in the presence of a normal sense of smell, it has been termed normosmic idiopathic hypogonadotropic hypogonadism (nIHH).</description>
        <dbReference type="MIM" id="614838"/>
    </disease>
    <text evidence="8">The disease is caused by variants affecting distinct genetic loci, including the gene represented in this entry. The genetics of hypogonadotropic hypogonadism involves various modes of transmission. Oligogenic inheritance has been reported in some patients carrying mutations in NSMF as well as in other HH-associated genes including FGFR1 (PubMed:23643382).</text>
</comment>
<comment type="miscellaneous">
    <text evidence="1">NSMF mRNAs expressed in the hippocampus exhibit a prominent dendritic localization which is mediated by a dendritic targeting element (DTE) residing in the 3'-untranslated region (3'UTR). Transport from dendrites to the nucleus is induced by NMDA receptor activation and results in a rapid stripping of synaptic contacts and a reduction of dendritic complexity (By similarity).</text>
</comment>
<comment type="similarity">
    <text evidence="12">Belongs to the NSMF family.</text>
</comment>
<comment type="sequence caution" evidence="12">
    <conflict type="erroneous initiation">
        <sequence resource="EMBL-CDS" id="BAB55139"/>
    </conflict>
    <text>Truncated N-terminus.</text>
</comment>
<gene>
    <name type="primary">NSMF</name>
    <name type="synonym">NELF</name>
</gene>
<accession>Q6X4W1</accession>
<accession>Q2TB96</accession>
<accession>Q6X4V7</accession>
<accession>Q6X4V8</accession>
<accession>Q6X4V9</accession>
<accession>Q8N2M2</accession>
<accession>Q96SY1</accession>
<accession>Q9NPM4</accession>
<accession>Q9NPP3</accession>
<accession>Q9NPS3</accession>
<protein>
    <recommendedName>
        <fullName>NMDA receptor synaptonuclear signaling and neuronal migration factor</fullName>
    </recommendedName>
    <alternativeName>
        <fullName>Nasal embryonic luteinizing hormone-releasing hormone factor</fullName>
        <shortName>Nasal embryonic LHRH factor</shortName>
    </alternativeName>
</protein>
<evidence type="ECO:0000250" key="1"/>
<evidence type="ECO:0000250" key="2">
    <source>
        <dbReference type="UniProtKB" id="Q99NF2"/>
    </source>
</evidence>
<evidence type="ECO:0000250" key="3">
    <source>
        <dbReference type="UniProtKB" id="Q9EPI6"/>
    </source>
</evidence>
<evidence type="ECO:0000256" key="4">
    <source>
        <dbReference type="SAM" id="MobiDB-lite"/>
    </source>
</evidence>
<evidence type="ECO:0000269" key="5">
    <source>
    </source>
</evidence>
<evidence type="ECO:0000269" key="6">
    <source>
    </source>
</evidence>
<evidence type="ECO:0000269" key="7">
    <source>
    </source>
</evidence>
<evidence type="ECO:0000269" key="8">
    <source>
    </source>
</evidence>
<evidence type="ECO:0000303" key="9">
    <source>
    </source>
</evidence>
<evidence type="ECO:0000303" key="10">
    <source>
    </source>
</evidence>
<evidence type="ECO:0000303" key="11">
    <source>
    </source>
</evidence>
<evidence type="ECO:0000305" key="12"/>